<organism>
    <name type="scientific">Azobacteroides pseudotrichonymphae genomovar. CFP2</name>
    <dbReference type="NCBI Taxonomy" id="511995"/>
    <lineage>
        <taxon>Bacteria</taxon>
        <taxon>Pseudomonadati</taxon>
        <taxon>Bacteroidota</taxon>
        <taxon>Bacteroidia</taxon>
        <taxon>Bacteroidales</taxon>
        <taxon>Candidatus Azobacteroides</taxon>
    </lineage>
</organism>
<dbReference type="EC" id="7.1.1.-" evidence="1"/>
<dbReference type="EMBL" id="AP010656">
    <property type="protein sequence ID" value="BAG83320.1"/>
    <property type="molecule type" value="Genomic_DNA"/>
</dbReference>
<dbReference type="RefSeq" id="WP_012573081.1">
    <property type="nucleotide sequence ID" value="NC_011565.1"/>
</dbReference>
<dbReference type="SMR" id="B6YQ48"/>
<dbReference type="STRING" id="511995.CFPG_057"/>
<dbReference type="KEGG" id="aps:CFPG_057"/>
<dbReference type="eggNOG" id="COG1007">
    <property type="taxonomic scope" value="Bacteria"/>
</dbReference>
<dbReference type="HOGENOM" id="CLU_007100_1_3_10"/>
<dbReference type="OrthoDB" id="9811718at2"/>
<dbReference type="Proteomes" id="UP000000723">
    <property type="component" value="Chromosome"/>
</dbReference>
<dbReference type="GO" id="GO:0005886">
    <property type="term" value="C:plasma membrane"/>
    <property type="evidence" value="ECO:0007669"/>
    <property type="project" value="UniProtKB-SubCell"/>
</dbReference>
<dbReference type="GO" id="GO:0008137">
    <property type="term" value="F:NADH dehydrogenase (ubiquinone) activity"/>
    <property type="evidence" value="ECO:0007669"/>
    <property type="project" value="InterPro"/>
</dbReference>
<dbReference type="GO" id="GO:0050136">
    <property type="term" value="F:NADH:ubiquinone reductase (non-electrogenic) activity"/>
    <property type="evidence" value="ECO:0007669"/>
    <property type="project" value="UniProtKB-UniRule"/>
</dbReference>
<dbReference type="GO" id="GO:0048038">
    <property type="term" value="F:quinone binding"/>
    <property type="evidence" value="ECO:0007669"/>
    <property type="project" value="UniProtKB-KW"/>
</dbReference>
<dbReference type="GO" id="GO:0042773">
    <property type="term" value="P:ATP synthesis coupled electron transport"/>
    <property type="evidence" value="ECO:0007669"/>
    <property type="project" value="InterPro"/>
</dbReference>
<dbReference type="HAMAP" id="MF_00445">
    <property type="entry name" value="NDH1_NuoN_1"/>
    <property type="match status" value="1"/>
</dbReference>
<dbReference type="InterPro" id="IPR010096">
    <property type="entry name" value="NADH-Q_OxRdtase_suN/2"/>
</dbReference>
<dbReference type="InterPro" id="IPR001750">
    <property type="entry name" value="ND/Mrp_TM"/>
</dbReference>
<dbReference type="NCBIfam" id="TIGR01770">
    <property type="entry name" value="NDH_I_N"/>
    <property type="match status" value="1"/>
</dbReference>
<dbReference type="PANTHER" id="PTHR22773">
    <property type="entry name" value="NADH DEHYDROGENASE"/>
    <property type="match status" value="1"/>
</dbReference>
<dbReference type="Pfam" id="PF00361">
    <property type="entry name" value="Proton_antipo_M"/>
    <property type="match status" value="1"/>
</dbReference>
<protein>
    <recommendedName>
        <fullName evidence="1">NADH-quinone oxidoreductase subunit N</fullName>
        <ecNumber evidence="1">7.1.1.-</ecNumber>
    </recommendedName>
    <alternativeName>
        <fullName evidence="1">NADH dehydrogenase I subunit N</fullName>
    </alternativeName>
    <alternativeName>
        <fullName evidence="1">NDH-1 subunit N</fullName>
    </alternativeName>
</protein>
<keyword id="KW-0997">Cell inner membrane</keyword>
<keyword id="KW-1003">Cell membrane</keyword>
<keyword id="KW-0472">Membrane</keyword>
<keyword id="KW-0520">NAD</keyword>
<keyword id="KW-0874">Quinone</keyword>
<keyword id="KW-1185">Reference proteome</keyword>
<keyword id="KW-1278">Translocase</keyword>
<keyword id="KW-0812">Transmembrane</keyword>
<keyword id="KW-1133">Transmembrane helix</keyword>
<keyword id="KW-0813">Transport</keyword>
<comment type="function">
    <text evidence="1">NDH-1 shuttles electrons from NADH, via FMN and iron-sulfur (Fe-S) centers, to quinones in the respiratory chain. The immediate electron acceptor for the enzyme in this species is believed to be a menaquinone. Couples the redox reaction to proton translocation (for every two electrons transferred, four hydrogen ions are translocated across the cytoplasmic membrane), and thus conserves the redox energy in a proton gradient.</text>
</comment>
<comment type="catalytic activity">
    <reaction evidence="1">
        <text>a quinone + NADH + 5 H(+)(in) = a quinol + NAD(+) + 4 H(+)(out)</text>
        <dbReference type="Rhea" id="RHEA:57888"/>
        <dbReference type="ChEBI" id="CHEBI:15378"/>
        <dbReference type="ChEBI" id="CHEBI:24646"/>
        <dbReference type="ChEBI" id="CHEBI:57540"/>
        <dbReference type="ChEBI" id="CHEBI:57945"/>
        <dbReference type="ChEBI" id="CHEBI:132124"/>
    </reaction>
</comment>
<comment type="subunit">
    <text evidence="1">NDH-1 is composed of 14 different subunits. Subunits NuoA, H, J, K, L, M, N constitute the membrane sector of the complex.</text>
</comment>
<comment type="subcellular location">
    <subcellularLocation>
        <location evidence="1">Cell inner membrane</location>
        <topology evidence="1">Multi-pass membrane protein</topology>
    </subcellularLocation>
</comment>
<comment type="similarity">
    <text evidence="1">Belongs to the complex I subunit 2 family.</text>
</comment>
<gene>
    <name evidence="1" type="primary">nuoN</name>
    <name type="ordered locus">CFPG_057</name>
</gene>
<name>NUON_AZOPC</name>
<sequence length="480" mass="53775">MDFSNFLCIEQELKLIALLVILFLYDTFCSKEWKKYFQNIAIVGFAIVIISEFPPYFTMYGEAFGGIHISSQLTFFMKSILNVATFLVFLQANKWLSSEKMLLRQGEFYVIMLISLLGMYFMISAENFVMLYIGMETASLPLACLVAFDKYQEKSAEAAVKYILTSALSSGVMLFGLSFLYGSLGSFYYSDIALNIVSSPLVKLGFVFFFGGLGFKLSLVPFHLWTADVYEGAPTSVTAYLSVVSKGAATFALIFVLYKVFGRIELIWNNILCWLLLATIVLGNLFAIRQQNIKRFFAFSSISQAGYILLGIIAGTAQGMTSTIFYTLVYLFSNLAAFGVIASVEYQTNGDTRIVSFNGLYRSNPGLAFVMMLAVFSLGGIPPFAGFFSKFFIFMAAAEQKQYILVFIALLNTVMSLYYYLLIVKAMFIEKRGEVVLEKIGIDNYNRISMVICTIGIFVIGFLSAIYEYIETISFGVLQK</sequence>
<feature type="chain" id="PRO_0000391102" description="NADH-quinone oxidoreductase subunit N">
    <location>
        <begin position="1"/>
        <end position="480"/>
    </location>
</feature>
<feature type="transmembrane region" description="Helical" evidence="1">
    <location>
        <begin position="5"/>
        <end position="25"/>
    </location>
</feature>
<feature type="transmembrane region" description="Helical" evidence="1">
    <location>
        <begin position="40"/>
        <end position="60"/>
    </location>
</feature>
<feature type="transmembrane region" description="Helical" evidence="1">
    <location>
        <begin position="69"/>
        <end position="89"/>
    </location>
</feature>
<feature type="transmembrane region" description="Helical" evidence="1">
    <location>
        <begin position="110"/>
        <end position="130"/>
    </location>
</feature>
<feature type="transmembrane region" description="Helical" evidence="1">
    <location>
        <begin position="162"/>
        <end position="182"/>
    </location>
</feature>
<feature type="transmembrane region" description="Helical" evidence="1">
    <location>
        <begin position="204"/>
        <end position="224"/>
    </location>
</feature>
<feature type="transmembrane region" description="Helical" evidence="1">
    <location>
        <begin position="237"/>
        <end position="257"/>
    </location>
</feature>
<feature type="transmembrane region" description="Helical" evidence="1">
    <location>
        <begin position="266"/>
        <end position="286"/>
    </location>
</feature>
<feature type="transmembrane region" description="Helical" evidence="1">
    <location>
        <begin position="296"/>
        <end position="316"/>
    </location>
</feature>
<feature type="transmembrane region" description="Helical" evidence="1">
    <location>
        <begin position="324"/>
        <end position="344"/>
    </location>
</feature>
<feature type="transmembrane region" description="Helical" evidence="1">
    <location>
        <begin position="368"/>
        <end position="388"/>
    </location>
</feature>
<feature type="transmembrane region" description="Helical" evidence="1">
    <location>
        <begin position="404"/>
        <end position="424"/>
    </location>
</feature>
<feature type="transmembrane region" description="Helical" evidence="1">
    <location>
        <begin position="450"/>
        <end position="470"/>
    </location>
</feature>
<evidence type="ECO:0000255" key="1">
    <source>
        <dbReference type="HAMAP-Rule" id="MF_00445"/>
    </source>
</evidence>
<proteinExistence type="inferred from homology"/>
<accession>B6YQ48</accession>
<reference key="1">
    <citation type="journal article" date="2008" name="Science">
        <title>Genome of an endosymbiont coupling N2 fixation to cellulolysis within RT protist cells in termite gut.</title>
        <authorList>
            <person name="Hongoh Y."/>
            <person name="Sharma V.K."/>
            <person name="Prakash T."/>
            <person name="Noda S."/>
            <person name="Toh H."/>
            <person name="Taylor T.D."/>
            <person name="Kudo T."/>
            <person name="Sakaki Y."/>
            <person name="Toyoda A."/>
            <person name="Hattori M."/>
            <person name="Ohkuma M."/>
        </authorList>
    </citation>
    <scope>NUCLEOTIDE SEQUENCE [LARGE SCALE GENOMIC DNA]</scope>
</reference>